<accession>B8LIX8</accession>
<accession>A8HZT2</accession>
<proteinExistence type="evidence at protein level"/>
<organism>
    <name type="scientific">Chlamydomonas reinhardtii</name>
    <name type="common">Chlamydomonas smithii</name>
    <dbReference type="NCBI Taxonomy" id="3055"/>
    <lineage>
        <taxon>Eukaryota</taxon>
        <taxon>Viridiplantae</taxon>
        <taxon>Chlorophyta</taxon>
        <taxon>core chlorophytes</taxon>
        <taxon>Chlorophyceae</taxon>
        <taxon>CS clade</taxon>
        <taxon>Chlamydomonadales</taxon>
        <taxon>Chlamydomonadaceae</taxon>
        <taxon>Chlamydomonas</taxon>
    </lineage>
</organism>
<sequence>MKDYAREENGGLVVMASCSDERFPPENMLDGKDNTFWVTTGMFPQEFVLRLESCIRVSKITTLSLNVRKLAVEKCDQDKPDQFEKVFEVELANRGDRLQTEVHQVNIRAKYLKFILLQGHGEFATVNRVSVVGGDDDGGGYDEPGGGYGSMQRQPSMGYGGGGGSAATGFAADPGNAAAGGGGGFEDEF</sequence>
<gene>
    <name type="primary">IFT25</name>
    <name type="synonym">FAP232</name>
    <name type="ORF">CHLREDRAFT_98791</name>
</gene>
<name>IFT25_CHLRE</name>
<dbReference type="EMBL" id="EF593953">
    <property type="protein sequence ID" value="ABU90455.1"/>
    <property type="molecule type" value="mRNA"/>
</dbReference>
<dbReference type="EMBL" id="DS496111">
    <property type="protein sequence ID" value="EDP08000.1"/>
    <property type="status" value="ALT_SEQ"/>
    <property type="molecule type" value="Genomic_DNA"/>
</dbReference>
<dbReference type="RefSeq" id="XP_001698507.1">
    <property type="nucleotide sequence ID" value="XM_001698455.1"/>
</dbReference>
<dbReference type="PDB" id="2YC2">
    <property type="method" value="X-ray"/>
    <property type="resolution" value="2.59 A"/>
    <property type="chains" value="A/B=1-135"/>
</dbReference>
<dbReference type="PDB" id="2YC4">
    <property type="method" value="X-ray"/>
    <property type="resolution" value="2.80 A"/>
    <property type="chains" value="A/B=1-135"/>
</dbReference>
<dbReference type="PDB" id="8RUY">
    <property type="method" value="EM"/>
    <property type="resolution" value="15.40 A"/>
    <property type="chains" value="R=1-189"/>
</dbReference>
<dbReference type="PDBsum" id="2YC2"/>
<dbReference type="PDBsum" id="2YC4"/>
<dbReference type="PDBsum" id="8RUY"/>
<dbReference type="EMDB" id="EMD-19515"/>
<dbReference type="SMR" id="B8LIX8"/>
<dbReference type="IntAct" id="B8LIX8">
    <property type="interactions" value="1"/>
</dbReference>
<dbReference type="MINT" id="B8LIX8"/>
<dbReference type="PaxDb" id="3055-EDP08000"/>
<dbReference type="EnsemblPlants" id="PNW77755">
    <property type="protein sequence ID" value="PNW77755"/>
    <property type="gene ID" value="CHLRE_10g450350v5"/>
</dbReference>
<dbReference type="GeneID" id="5723882"/>
<dbReference type="Gramene" id="PNW77755">
    <property type="protein sequence ID" value="PNW77755"/>
    <property type="gene ID" value="CHLRE_10g450350v5"/>
</dbReference>
<dbReference type="KEGG" id="cre:CHLRE_10g450350v5"/>
<dbReference type="eggNOG" id="KOG3437">
    <property type="taxonomic scope" value="Eukaryota"/>
</dbReference>
<dbReference type="HOGENOM" id="CLU_132151_0_0_1"/>
<dbReference type="OMA" id="MWTRNAK"/>
<dbReference type="OrthoDB" id="271080at2759"/>
<dbReference type="EvolutionaryTrace" id="B8LIX8"/>
<dbReference type="GO" id="GO:0005737">
    <property type="term" value="C:cytoplasm"/>
    <property type="evidence" value="ECO:0007669"/>
    <property type="project" value="UniProtKB-KW"/>
</dbReference>
<dbReference type="GO" id="GO:0005856">
    <property type="term" value="C:cytoskeleton"/>
    <property type="evidence" value="ECO:0007669"/>
    <property type="project" value="UniProtKB-KW"/>
</dbReference>
<dbReference type="GO" id="GO:0030992">
    <property type="term" value="C:intraciliary transport particle B"/>
    <property type="evidence" value="ECO:0000314"/>
    <property type="project" value="UniProtKB"/>
</dbReference>
<dbReference type="GO" id="GO:0031514">
    <property type="term" value="C:motile cilium"/>
    <property type="evidence" value="ECO:0007669"/>
    <property type="project" value="UniProtKB-SubCell"/>
</dbReference>
<dbReference type="GO" id="GO:0046872">
    <property type="term" value="F:metal ion binding"/>
    <property type="evidence" value="ECO:0007669"/>
    <property type="project" value="UniProtKB-KW"/>
</dbReference>
<dbReference type="GO" id="GO:0042073">
    <property type="term" value="P:intraciliary transport"/>
    <property type="evidence" value="ECO:0007669"/>
    <property type="project" value="InterPro"/>
</dbReference>
<dbReference type="FunFam" id="2.60.120.260:FF:000081">
    <property type="entry name" value="Intraflagellar transport protein 25 homolog"/>
    <property type="match status" value="1"/>
</dbReference>
<dbReference type="Gene3D" id="2.60.120.260">
    <property type="entry name" value="Galactose-binding domain-like"/>
    <property type="match status" value="1"/>
</dbReference>
<dbReference type="InterPro" id="IPR008979">
    <property type="entry name" value="Galactose-bd-like_sf"/>
</dbReference>
<dbReference type="InterPro" id="IPR033558">
    <property type="entry name" value="IFT25"/>
</dbReference>
<dbReference type="PANTHER" id="PTHR33906">
    <property type="entry name" value="INTRAFLAGELLAR TRANSPORT PROTEIN 25 HOMOLOG"/>
    <property type="match status" value="1"/>
</dbReference>
<dbReference type="PANTHER" id="PTHR33906:SF1">
    <property type="entry name" value="INTRAFLAGELLAR TRANSPORT PROTEIN 25 HOMOLOG"/>
    <property type="match status" value="1"/>
</dbReference>
<dbReference type="SUPFAM" id="SSF49785">
    <property type="entry name" value="Galactose-binding domain-like"/>
    <property type="match status" value="1"/>
</dbReference>
<reference key="1">
    <citation type="journal article" date="2009" name="PLoS ONE">
        <title>Intraflagellar transport (IFT) protein IFT25 is a phosphoprotein component of IFT complex B and physically interacts with IFT27 in Chlamydomonas.</title>
        <authorList>
            <person name="Wang Z."/>
            <person name="Fan Z.C."/>
            <person name="Williamson S.M."/>
            <person name="Qin H."/>
        </authorList>
    </citation>
    <scope>NUCLEOTIDE SEQUENCE [MRNA]</scope>
    <scope>PROTEIN SEQUENCE OF 98-108 AND 129-15</scope>
    <scope>FUNCTION</scope>
    <scope>IDENTIFICATION IN THE IFT COMPLEX B</scope>
    <scope>SUBCELLULAR LOCATION</scope>
    <scope>INTERACTION WITH IFT27</scope>
    <scope>PHOSPHORYLATION</scope>
</reference>
<reference key="2">
    <citation type="journal article" date="2007" name="Science">
        <title>The Chlamydomonas genome reveals the evolution of key animal and plant functions.</title>
        <authorList>
            <person name="Merchant S.S."/>
            <person name="Prochnik S.E."/>
            <person name="Vallon O."/>
            <person name="Harris E.H."/>
            <person name="Karpowicz S.J."/>
            <person name="Witman G.B."/>
            <person name="Terry A."/>
            <person name="Salamov A."/>
            <person name="Fritz-Laylin L.K."/>
            <person name="Marechal-Drouard L."/>
            <person name="Marshall W.F."/>
            <person name="Qu L.H."/>
            <person name="Nelson D.R."/>
            <person name="Sanderfoot A.A."/>
            <person name="Spalding M.H."/>
            <person name="Kapitonov V.V."/>
            <person name="Ren Q."/>
            <person name="Ferris P."/>
            <person name="Lindquist E."/>
            <person name="Shapiro H."/>
            <person name="Lucas S.M."/>
            <person name="Grimwood J."/>
            <person name="Schmutz J."/>
            <person name="Cardol P."/>
            <person name="Cerutti H."/>
            <person name="Chanfreau G."/>
            <person name="Chen C.L."/>
            <person name="Cognat V."/>
            <person name="Croft M.T."/>
            <person name="Dent R."/>
            <person name="Dutcher S."/>
            <person name="Fernandez E."/>
            <person name="Fukuzawa H."/>
            <person name="Gonzalez-Ballester D."/>
            <person name="Gonzalez-Halphen D."/>
            <person name="Hallmann A."/>
            <person name="Hanikenne M."/>
            <person name="Hippler M."/>
            <person name="Inwood W."/>
            <person name="Jabbari K."/>
            <person name="Kalanon M."/>
            <person name="Kuras R."/>
            <person name="Lefebvre P.A."/>
            <person name="Lemaire S.D."/>
            <person name="Lobanov A.V."/>
            <person name="Lohr M."/>
            <person name="Manuell A."/>
            <person name="Meier I."/>
            <person name="Mets L."/>
            <person name="Mittag M."/>
            <person name="Mittelmeier T."/>
            <person name="Moroney J.V."/>
            <person name="Moseley J."/>
            <person name="Napoli C."/>
            <person name="Nedelcu A.M."/>
            <person name="Niyogi K."/>
            <person name="Novoselov S.V."/>
            <person name="Paulsen I.T."/>
            <person name="Pazour G.J."/>
            <person name="Purton S."/>
            <person name="Ral J.P."/>
            <person name="Riano-Pachon D.M."/>
            <person name="Riekhof W."/>
            <person name="Rymarquis L."/>
            <person name="Schroda M."/>
            <person name="Stern D."/>
            <person name="Umen J."/>
            <person name="Willows R."/>
            <person name="Wilson N."/>
            <person name="Zimmer S.L."/>
            <person name="Allmer J."/>
            <person name="Balk J."/>
            <person name="Bisova K."/>
            <person name="Chen C.J."/>
            <person name="Elias M."/>
            <person name="Gendler K."/>
            <person name="Hauser C."/>
            <person name="Lamb M.R."/>
            <person name="Ledford H."/>
            <person name="Long J.C."/>
            <person name="Minagawa J."/>
            <person name="Page M.D."/>
            <person name="Pan J."/>
            <person name="Pootakham W."/>
            <person name="Roje S."/>
            <person name="Rose A."/>
            <person name="Stahlberg E."/>
            <person name="Terauchi A.M."/>
            <person name="Yang P."/>
            <person name="Ball S."/>
            <person name="Bowler C."/>
            <person name="Dieckmann C.L."/>
            <person name="Gladyshev V.N."/>
            <person name="Green P."/>
            <person name="Jorgensen R."/>
            <person name="Mayfield S."/>
            <person name="Mueller-Roeber B."/>
            <person name="Rajamani S."/>
            <person name="Sayre R.T."/>
            <person name="Brokstein P."/>
            <person name="Dubchak I."/>
            <person name="Goodstein D."/>
            <person name="Hornick L."/>
            <person name="Huang Y.W."/>
            <person name="Jhaveri J."/>
            <person name="Luo Y."/>
            <person name="Martinez D."/>
            <person name="Ngau W.C."/>
            <person name="Otillar B."/>
            <person name="Poliakov A."/>
            <person name="Porter A."/>
            <person name="Szajkowski L."/>
            <person name="Werner G."/>
            <person name="Zhou K."/>
            <person name="Grigoriev I.V."/>
            <person name="Rokhsar D.S."/>
            <person name="Grossman A.R."/>
        </authorList>
    </citation>
    <scope>NUCLEOTIDE SEQUENCE [LARGE SCALE GENOMIC DNA]</scope>
    <source>
        <strain>CC-503</strain>
    </source>
</reference>
<reference key="3">
    <citation type="journal article" date="2009" name="Cell Motil. Cytoskeleton">
        <title>HA-tagging of putative flagellar proteins in Chlamydomonas reinhardtii identifies a novel protein of intraflagellar transport complex B.</title>
        <authorList>
            <person name="Lechtreck K.F."/>
            <person name="Luro S."/>
            <person name="Awata J."/>
            <person name="Witman G.B."/>
        </authorList>
    </citation>
    <scope>IDENTIFICATION IN THE IFT COMPLEX B</scope>
    <scope>SUBCELLULAR LOCATION</scope>
</reference>
<reference key="4">
    <citation type="journal article" date="2011" name="EMBO J.">
        <title>Crystal structure of the intraflagellar transport complex 25/27.</title>
        <authorList>
            <person name="Bhogaraju S."/>
            <person name="Taschner M."/>
            <person name="Morawetz M."/>
            <person name="Basquin C."/>
            <person name="Lorentzen E."/>
        </authorList>
    </citation>
    <scope>X-RAY CRYSTALLOGRAPHY (2.59 ANGSTROMS) OF 1-135 IN COMPLEX WITH CALCIUM AND IFT27</scope>
    <scope>INTERACTION WITH IFT27</scope>
    <scope>MUTAGENESIS OF ASP-30; THR-35; 38-VAL--THR-40 AND THR-125</scope>
</reference>
<feature type="chain" id="PRO_0000424811" description="Intraflagellar transport protein 25">
    <location>
        <begin position="1"/>
        <end position="189"/>
    </location>
</feature>
<feature type="region of interest" description="Disordered" evidence="1">
    <location>
        <begin position="135"/>
        <end position="189"/>
    </location>
</feature>
<feature type="compositionally biased region" description="Low complexity" evidence="1">
    <location>
        <begin position="167"/>
        <end position="177"/>
    </location>
</feature>
<feature type="compositionally biased region" description="Gly residues" evidence="1">
    <location>
        <begin position="178"/>
        <end position="189"/>
    </location>
</feature>
<feature type="binding site" evidence="4">
    <location>
        <position position="27"/>
    </location>
    <ligand>
        <name>Ca(2+)</name>
        <dbReference type="ChEBI" id="CHEBI:29108"/>
    </ligand>
</feature>
<feature type="binding site" evidence="4">
    <location>
        <position position="30"/>
    </location>
    <ligand>
        <name>Ca(2+)</name>
        <dbReference type="ChEBI" id="CHEBI:29108"/>
    </ligand>
</feature>
<feature type="binding site" evidence="4">
    <location>
        <position position="32"/>
    </location>
    <ligand>
        <name>Ca(2+)</name>
        <dbReference type="ChEBI" id="CHEBI:29108"/>
    </ligand>
</feature>
<feature type="binding site" evidence="4">
    <location>
        <position position="35"/>
    </location>
    <ligand>
        <name>Ca(2+)</name>
        <dbReference type="ChEBI" id="CHEBI:29108"/>
    </ligand>
</feature>
<feature type="binding site" evidence="4">
    <location>
        <position position="127"/>
    </location>
    <ligand>
        <name>Ca(2+)</name>
        <dbReference type="ChEBI" id="CHEBI:29108"/>
    </ligand>
</feature>
<feature type="mutagenesis site" description="Does not affect interaction with IFT27." evidence="4">
    <original>D</original>
    <variation>A</variation>
    <location>
        <position position="30"/>
    </location>
</feature>
<feature type="mutagenesis site" description="Does not affect interaction with IFT27." evidence="4">
    <original>T</original>
    <variation>A</variation>
    <location>
        <position position="35"/>
    </location>
</feature>
<feature type="mutagenesis site" description="Abolishes interaction with IFT27; when associated with E-125." evidence="4">
    <original>VTT</original>
    <variation>RAR</variation>
    <location>
        <begin position="38"/>
        <end position="40"/>
    </location>
</feature>
<feature type="mutagenesis site" description="Abolishes interaction with IFT27; when associated with 38-R--R-40." evidence="4">
    <original>T</original>
    <variation>E</variation>
    <location>
        <position position="125"/>
    </location>
</feature>
<feature type="sequence conflict" description="In Ref. 1; AA sequence." evidence="5" ref="1">
    <original>E</original>
    <variation>EV</variation>
    <location>
        <position position="101"/>
    </location>
</feature>
<feature type="helix" evidence="8">
    <location>
        <begin position="7"/>
        <end position="9"/>
    </location>
</feature>
<feature type="helix" evidence="7">
    <location>
        <begin position="25"/>
        <end position="29"/>
    </location>
</feature>
<feature type="strand" evidence="7">
    <location>
        <begin position="41"/>
        <end position="43"/>
    </location>
</feature>
<feature type="strand" evidence="7">
    <location>
        <begin position="45"/>
        <end position="75"/>
    </location>
</feature>
<feature type="strand" evidence="7">
    <location>
        <begin position="77"/>
        <end position="79"/>
    </location>
</feature>
<feature type="strand" evidence="7">
    <location>
        <begin position="84"/>
        <end position="90"/>
    </location>
</feature>
<feature type="strand" evidence="7">
    <location>
        <begin position="99"/>
        <end position="122"/>
    </location>
</feature>
<feature type="strand" evidence="7">
    <location>
        <begin position="125"/>
        <end position="134"/>
    </location>
</feature>
<keyword id="KW-0002">3D-structure</keyword>
<keyword id="KW-0106">Calcium</keyword>
<keyword id="KW-0966">Cell projection</keyword>
<keyword id="KW-0969">Cilium</keyword>
<keyword id="KW-0963">Cytoplasm</keyword>
<keyword id="KW-0206">Cytoskeleton</keyword>
<keyword id="KW-0903">Direct protein sequencing</keyword>
<keyword id="KW-0282">Flagellum</keyword>
<keyword id="KW-0479">Metal-binding</keyword>
<protein>
    <recommendedName>
        <fullName>Intraflagellar transport protein 25</fullName>
    </recommendedName>
    <alternativeName>
        <fullName>Flagellar-associated protein 232</fullName>
    </alternativeName>
</protein>
<comment type="function">
    <text evidence="3">Component of the intraflagellar transport (IFT) complex B. Forms a subcomplex within the IFT complex B with IFT27.</text>
</comment>
<comment type="subunit">
    <text evidence="2 3 4">Component of the IFT complex B, the core composed of IFT25, IFT27, IFT46, IFT52, IFT74, IFT81 and IFT88 as well as associated subunits IFT20, IFT57, IFT80 and IFT172. Interacts with IFT27; the interaction is direct.</text>
</comment>
<comment type="interaction">
    <interactant intactId="EBI-8629367">
        <id>B8LIX8</id>
    </interactant>
    <interactant intactId="EBI-8629375">
        <id>A8HN58</id>
        <label>IFT27</label>
    </interactant>
    <organismsDiffer>false</organismsDiffer>
    <experiments>3</experiments>
</comment>
<comment type="subcellular location">
    <subcellularLocation>
        <location>Cell projection</location>
        <location>Cilium</location>
        <location>Flagellum</location>
    </subcellularLocation>
    <subcellularLocation>
        <location>Cytoplasm</location>
        <location>Cytoskeleton</location>
        <location>Flagellum basal body</location>
    </subcellularLocation>
    <text>Colocalizes with IFT27 at the distal-most portion of basal bodies, probably the transition zones, and concentrates in the basal body region.</text>
</comment>
<comment type="PTM">
    <text evidence="3">Phosphorylated.</text>
</comment>
<comment type="similarity">
    <text evidence="5">Belongs to the IFT25 family.</text>
</comment>
<comment type="caution">
    <text evidence="6">Was initially classified as a member of the small heat shock family protein. However, it was later shown that it is not the case (PubMed:21505417).</text>
</comment>
<comment type="sequence caution" evidence="5">
    <conflict type="erroneous gene model prediction">
        <sequence resource="EMBL-CDS" id="EDP08000"/>
    </conflict>
</comment>
<evidence type="ECO:0000256" key="1">
    <source>
        <dbReference type="SAM" id="MobiDB-lite"/>
    </source>
</evidence>
<evidence type="ECO:0000269" key="2">
    <source>
    </source>
</evidence>
<evidence type="ECO:0000269" key="3">
    <source>
    </source>
</evidence>
<evidence type="ECO:0000269" key="4">
    <source>
    </source>
</evidence>
<evidence type="ECO:0000305" key="5"/>
<evidence type="ECO:0000305" key="6">
    <source>
    </source>
</evidence>
<evidence type="ECO:0007829" key="7">
    <source>
        <dbReference type="PDB" id="2YC2"/>
    </source>
</evidence>
<evidence type="ECO:0007829" key="8">
    <source>
        <dbReference type="PDB" id="2YC4"/>
    </source>
</evidence>